<organism>
    <name type="scientific">Shewanella baltica (strain OS185)</name>
    <dbReference type="NCBI Taxonomy" id="402882"/>
    <lineage>
        <taxon>Bacteria</taxon>
        <taxon>Pseudomonadati</taxon>
        <taxon>Pseudomonadota</taxon>
        <taxon>Gammaproteobacteria</taxon>
        <taxon>Alteromonadales</taxon>
        <taxon>Shewanellaceae</taxon>
        <taxon>Shewanella</taxon>
    </lineage>
</organism>
<comment type="function">
    <text evidence="1">Catalyzes the reversible formation of acyl-phosphate (acyl-PO(4)) from acyl-[acyl-carrier-protein] (acyl-ACP). This enzyme utilizes acyl-ACP as fatty acyl donor, but not acyl-CoA.</text>
</comment>
<comment type="catalytic activity">
    <reaction evidence="1">
        <text>a fatty acyl-[ACP] + phosphate = an acyl phosphate + holo-[ACP]</text>
        <dbReference type="Rhea" id="RHEA:42292"/>
        <dbReference type="Rhea" id="RHEA-COMP:9685"/>
        <dbReference type="Rhea" id="RHEA-COMP:14125"/>
        <dbReference type="ChEBI" id="CHEBI:43474"/>
        <dbReference type="ChEBI" id="CHEBI:59918"/>
        <dbReference type="ChEBI" id="CHEBI:64479"/>
        <dbReference type="ChEBI" id="CHEBI:138651"/>
        <dbReference type="EC" id="2.3.1.274"/>
    </reaction>
</comment>
<comment type="pathway">
    <text evidence="1">Lipid metabolism; phospholipid metabolism.</text>
</comment>
<comment type="subunit">
    <text evidence="1">Homodimer. Probably interacts with PlsY.</text>
</comment>
<comment type="subcellular location">
    <subcellularLocation>
        <location evidence="1">Cytoplasm</location>
    </subcellularLocation>
    <text evidence="1">Associated with the membrane possibly through PlsY.</text>
</comment>
<comment type="similarity">
    <text evidence="1">Belongs to the PlsX family.</text>
</comment>
<feature type="chain" id="PRO_1000001825" description="Phosphate acyltransferase">
    <location>
        <begin position="1"/>
        <end position="342"/>
    </location>
</feature>
<dbReference type="EC" id="2.3.1.274" evidence="1"/>
<dbReference type="EMBL" id="CP000753">
    <property type="protein sequence ID" value="ABS07856.1"/>
    <property type="molecule type" value="Genomic_DNA"/>
</dbReference>
<dbReference type="RefSeq" id="WP_006081227.1">
    <property type="nucleotide sequence ID" value="NC_009665.1"/>
</dbReference>
<dbReference type="SMR" id="A6WM17"/>
<dbReference type="GeneID" id="11771973"/>
<dbReference type="KEGG" id="sbm:Shew185_1713"/>
<dbReference type="HOGENOM" id="CLU_039379_1_0_6"/>
<dbReference type="UniPathway" id="UPA00085"/>
<dbReference type="GO" id="GO:0005737">
    <property type="term" value="C:cytoplasm"/>
    <property type="evidence" value="ECO:0007669"/>
    <property type="project" value="UniProtKB-SubCell"/>
</dbReference>
<dbReference type="GO" id="GO:0043811">
    <property type="term" value="F:phosphate:acyl-[acyl carrier protein] acyltransferase activity"/>
    <property type="evidence" value="ECO:0007669"/>
    <property type="project" value="UniProtKB-UniRule"/>
</dbReference>
<dbReference type="GO" id="GO:0006633">
    <property type="term" value="P:fatty acid biosynthetic process"/>
    <property type="evidence" value="ECO:0007669"/>
    <property type="project" value="UniProtKB-UniRule"/>
</dbReference>
<dbReference type="GO" id="GO:0008654">
    <property type="term" value="P:phospholipid biosynthetic process"/>
    <property type="evidence" value="ECO:0007669"/>
    <property type="project" value="UniProtKB-KW"/>
</dbReference>
<dbReference type="Gene3D" id="3.40.718.10">
    <property type="entry name" value="Isopropylmalate Dehydrogenase"/>
    <property type="match status" value="1"/>
</dbReference>
<dbReference type="HAMAP" id="MF_00019">
    <property type="entry name" value="PlsX"/>
    <property type="match status" value="1"/>
</dbReference>
<dbReference type="InterPro" id="IPR003664">
    <property type="entry name" value="FA_synthesis"/>
</dbReference>
<dbReference type="InterPro" id="IPR012281">
    <property type="entry name" value="Phospholipid_synth_PlsX-like"/>
</dbReference>
<dbReference type="NCBIfam" id="TIGR00182">
    <property type="entry name" value="plsX"/>
    <property type="match status" value="1"/>
</dbReference>
<dbReference type="PANTHER" id="PTHR30100">
    <property type="entry name" value="FATTY ACID/PHOSPHOLIPID SYNTHESIS PROTEIN PLSX"/>
    <property type="match status" value="1"/>
</dbReference>
<dbReference type="PANTHER" id="PTHR30100:SF1">
    <property type="entry name" value="PHOSPHATE ACYLTRANSFERASE"/>
    <property type="match status" value="1"/>
</dbReference>
<dbReference type="Pfam" id="PF02504">
    <property type="entry name" value="FA_synthesis"/>
    <property type="match status" value="1"/>
</dbReference>
<dbReference type="PIRSF" id="PIRSF002465">
    <property type="entry name" value="Phsphlp_syn_PlsX"/>
    <property type="match status" value="1"/>
</dbReference>
<dbReference type="SUPFAM" id="SSF53659">
    <property type="entry name" value="Isocitrate/Isopropylmalate dehydrogenase-like"/>
    <property type="match status" value="1"/>
</dbReference>
<accession>A6WM17</accession>
<keyword id="KW-0963">Cytoplasm</keyword>
<keyword id="KW-0444">Lipid biosynthesis</keyword>
<keyword id="KW-0443">Lipid metabolism</keyword>
<keyword id="KW-0594">Phospholipid biosynthesis</keyword>
<keyword id="KW-1208">Phospholipid metabolism</keyword>
<keyword id="KW-0808">Transferase</keyword>
<protein>
    <recommendedName>
        <fullName evidence="1">Phosphate acyltransferase</fullName>
        <ecNumber evidence="1">2.3.1.274</ecNumber>
    </recommendedName>
    <alternativeName>
        <fullName evidence="1">Acyl-ACP phosphotransacylase</fullName>
    </alternativeName>
    <alternativeName>
        <fullName evidence="1">Acyl-[acyl-carrier-protein]--phosphate acyltransferase</fullName>
    </alternativeName>
    <alternativeName>
        <fullName evidence="1">Phosphate-acyl-ACP acyltransferase</fullName>
    </alternativeName>
</protein>
<name>PLSX_SHEB8</name>
<proteinExistence type="inferred from homology"/>
<sequence>MTNLTLALDAMGGDHGPHVTVPAALRALQLHSFLKIILVGDKTEIDVYLRQAEANLLSRIEIIHTDEVVSMSDRPVHALRTRKNSSMRLAIELVRDDRAQACVSAGNTGALMAMAKVLLKTLPGVDRPALVSCLPAVTQKPVYLLDLGANISCDSETLFQFAVMGSVLCEAVDKKSRPKVALLNVGIEEIKGNDQVQQAAQLLQHTDQINYTGFIEGDEIYSGNVDVIVCDGFVGNITLKTSEGIAKLLVHQLKRGLTQGLFVRFLAKLIAPRIQAVLSQMNPDHYNGASLIGLRGIVVKSHGNADETAYLQAISLAVTEAQRRLPEMIKDRLESILLDINN</sequence>
<gene>
    <name evidence="1" type="primary">plsX</name>
    <name type="ordered locus">Shew185_1713</name>
</gene>
<evidence type="ECO:0000255" key="1">
    <source>
        <dbReference type="HAMAP-Rule" id="MF_00019"/>
    </source>
</evidence>
<reference key="1">
    <citation type="submission" date="2007-07" db="EMBL/GenBank/DDBJ databases">
        <title>Complete sequence of chromosome of Shewanella baltica OS185.</title>
        <authorList>
            <consortium name="US DOE Joint Genome Institute"/>
            <person name="Copeland A."/>
            <person name="Lucas S."/>
            <person name="Lapidus A."/>
            <person name="Barry K."/>
            <person name="Glavina del Rio T."/>
            <person name="Dalin E."/>
            <person name="Tice H."/>
            <person name="Pitluck S."/>
            <person name="Sims D."/>
            <person name="Brettin T."/>
            <person name="Bruce D."/>
            <person name="Detter J.C."/>
            <person name="Han C."/>
            <person name="Schmutz J."/>
            <person name="Larimer F."/>
            <person name="Land M."/>
            <person name="Hauser L."/>
            <person name="Kyrpides N."/>
            <person name="Mikhailova N."/>
            <person name="Brettar I."/>
            <person name="Rodrigues J."/>
            <person name="Konstantinidis K."/>
            <person name="Tiedje J."/>
            <person name="Richardson P."/>
        </authorList>
    </citation>
    <scope>NUCLEOTIDE SEQUENCE [LARGE SCALE GENOMIC DNA]</scope>
    <source>
        <strain>OS185</strain>
    </source>
</reference>